<organism>
    <name type="scientific">Flaveria pringlei</name>
    <dbReference type="NCBI Taxonomy" id="4226"/>
    <lineage>
        <taxon>Eukaryota</taxon>
        <taxon>Viridiplantae</taxon>
        <taxon>Streptophyta</taxon>
        <taxon>Embryophyta</taxon>
        <taxon>Tracheophyta</taxon>
        <taxon>Spermatophyta</taxon>
        <taxon>Magnoliopsida</taxon>
        <taxon>eudicotyledons</taxon>
        <taxon>Gunneridae</taxon>
        <taxon>Pentapetalae</taxon>
        <taxon>asterids</taxon>
        <taxon>campanulids</taxon>
        <taxon>Asterales</taxon>
        <taxon>Asteraceae</taxon>
        <taxon>Asteroideae</taxon>
        <taxon>Heliantheae alliance</taxon>
        <taxon>Tageteae</taxon>
        <taxon>Flaveria</taxon>
    </lineage>
</organism>
<evidence type="ECO:0000250" key="1"/>
<evidence type="ECO:0000305" key="2"/>
<protein>
    <recommendedName>
        <fullName>NADP-dependent malic enzyme, chloroplastic</fullName>
        <shortName>NADP-ME</shortName>
        <ecNumber>1.1.1.40</ecNumber>
    </recommendedName>
</protein>
<accession>P36444</accession>
<sequence length="647" mass="71204">MMSLNSSSVVKSSISGVSWTQSQSVRLSVRRPMVVAMVNSNGRPERSVGVSVDGAVKDVNAPVAVEVADSESKKPTAVVGGGVEDVYGEDSATEDHFITPWSVSVASGYSLLRDPHHNKGLAFTEKERDAHYLRGLLPPVVVNHDLQVKKMMHNIRQYEVPLQRYQAMMDLQERNERLFYKLLIENIEELLPIVYTPTVGEACQKYGTIFKNPQGLYISLKDKGKVLEILKNWPQKKIQVIVVTDGERILGLGDLGCQGMGIPVGKLSLYTALGGIRPSACLPITIDVGTNNEKMLNDEFYIGLRQRRASGKEYAELMNEFMSAVKQNYGEKVLIQFEDFANHNAFDLLEKYRTTHLVFNDDIQGTASVVLAGLISALKLVGGSLADHKFLFLGAGEAGTGIAELIALEISKQTNAPLEETRKKIWLVDSKGLIVRSRLDSLQHFKKPWAHDHEPVNKFLDAVKAIKPTVLIGSSGAGQTFTKEVVEAMSSFNEKPIILALSNPTSQSECTAEQAYTWSEGRTIFASGSPFAPVEYNGKVYVSGQSNNAYIFPGFGLGLIISGAIRVHDEMLLAASEALAEQVTQEHFDNGLIYPPFTNIRKISAHIAAKVAAKAYELGLASRLPQPENLVAYAESCMYSPKYRNYR</sequence>
<feature type="transit peptide" description="Chloroplast">
    <location>
        <begin position="1"/>
        <end position="61" status="uncertain"/>
    </location>
</feature>
<feature type="chain" id="PRO_0000018545" description="NADP-dependent malic enzyme, chloroplastic">
    <location>
        <begin position="62" status="uncertain"/>
        <end position="647"/>
    </location>
</feature>
<feature type="active site" description="Proton donor" evidence="1">
    <location>
        <position position="195"/>
    </location>
</feature>
<feature type="active site" description="Proton acceptor" evidence="1">
    <location>
        <position position="266"/>
    </location>
</feature>
<feature type="binding site" evidence="1">
    <location>
        <position position="248"/>
    </location>
    <ligand>
        <name>NAD(+)</name>
        <dbReference type="ChEBI" id="CHEBI:57540"/>
    </ligand>
</feature>
<feature type="binding site" evidence="1">
    <location>
        <position position="338"/>
    </location>
    <ligand>
        <name>a divalent metal cation</name>
        <dbReference type="ChEBI" id="CHEBI:60240"/>
    </ligand>
</feature>
<feature type="binding site" evidence="1">
    <location>
        <position position="339"/>
    </location>
    <ligand>
        <name>a divalent metal cation</name>
        <dbReference type="ChEBI" id="CHEBI:60240"/>
    </ligand>
</feature>
<feature type="binding site" evidence="1">
    <location>
        <position position="362"/>
    </location>
    <ligand>
        <name>a divalent metal cation</name>
        <dbReference type="ChEBI" id="CHEBI:60240"/>
    </ligand>
</feature>
<feature type="binding site" evidence="1">
    <location>
        <position position="362"/>
    </location>
    <ligand>
        <name>NAD(+)</name>
        <dbReference type="ChEBI" id="CHEBI:57540"/>
    </ligand>
</feature>
<feature type="binding site" evidence="1">
    <location>
        <begin position="391"/>
        <end position="407"/>
    </location>
    <ligand>
        <name>NADP(+)</name>
        <dbReference type="ChEBI" id="CHEBI:58349"/>
    </ligand>
</feature>
<feature type="binding site" evidence="1">
    <location>
        <position position="503"/>
    </location>
    <ligand>
        <name>NAD(+)</name>
        <dbReference type="ChEBI" id="CHEBI:57540"/>
    </ligand>
</feature>
<feature type="site" description="Important for activity" evidence="1">
    <location>
        <position position="362"/>
    </location>
</feature>
<keyword id="KW-0150">Chloroplast</keyword>
<keyword id="KW-0479">Metal-binding</keyword>
<keyword id="KW-0520">NAD</keyword>
<keyword id="KW-0521">NADP</keyword>
<keyword id="KW-0560">Oxidoreductase</keyword>
<keyword id="KW-0934">Plastid</keyword>
<keyword id="KW-0809">Transit peptide</keyword>
<comment type="function">
    <text>The chloroplastic ME isoform decarboxylates malate shuttled from neighboring mesophyll cells. The CO(2) released is then refixed by ribulose-bisphosphate carboxylase. This pathway eliminates the photorespiratory loss of CO(2) that occurs in most plants.</text>
</comment>
<comment type="catalytic activity">
    <reaction>
        <text>(S)-malate + NADP(+) = pyruvate + CO2 + NADPH</text>
        <dbReference type="Rhea" id="RHEA:18253"/>
        <dbReference type="ChEBI" id="CHEBI:15361"/>
        <dbReference type="ChEBI" id="CHEBI:15589"/>
        <dbReference type="ChEBI" id="CHEBI:16526"/>
        <dbReference type="ChEBI" id="CHEBI:57783"/>
        <dbReference type="ChEBI" id="CHEBI:58349"/>
        <dbReference type="EC" id="1.1.1.40"/>
    </reaction>
</comment>
<comment type="catalytic activity">
    <reaction>
        <text>oxaloacetate + H(+) = pyruvate + CO2</text>
        <dbReference type="Rhea" id="RHEA:15641"/>
        <dbReference type="ChEBI" id="CHEBI:15361"/>
        <dbReference type="ChEBI" id="CHEBI:15378"/>
        <dbReference type="ChEBI" id="CHEBI:16452"/>
        <dbReference type="ChEBI" id="CHEBI:16526"/>
        <dbReference type="EC" id="1.1.1.40"/>
    </reaction>
</comment>
<comment type="cofactor">
    <cofactor evidence="1">
        <name>Mg(2+)</name>
        <dbReference type="ChEBI" id="CHEBI:18420"/>
    </cofactor>
    <cofactor evidence="1">
        <name>Mn(2+)</name>
        <dbReference type="ChEBI" id="CHEBI:29035"/>
    </cofactor>
    <text evidence="1">Divalent metal cations. Prefers magnesium or manganese.</text>
</comment>
<comment type="pathway">
    <text>Photosynthesis; C3 acid pathway.</text>
</comment>
<comment type="subunit">
    <text>Homotetramer.</text>
</comment>
<comment type="subcellular location">
    <subcellularLocation>
        <location>Plastid</location>
        <location>Chloroplast</location>
    </subcellularLocation>
</comment>
<comment type="similarity">
    <text evidence="2">Belongs to the malic enzymes family.</text>
</comment>
<proteinExistence type="evidence at transcript level"/>
<name>MAOC_FLAPR</name>
<dbReference type="EC" id="1.1.1.40"/>
<dbReference type="EMBL" id="X78069">
    <property type="protein sequence ID" value="CAA54986.1"/>
    <property type="molecule type" value="mRNA"/>
</dbReference>
<dbReference type="PIR" id="S52016">
    <property type="entry name" value="S42939"/>
</dbReference>
<dbReference type="SMR" id="P36444"/>
<dbReference type="UniPathway" id="UPA00321"/>
<dbReference type="GO" id="GO:0009507">
    <property type="term" value="C:chloroplast"/>
    <property type="evidence" value="ECO:0007669"/>
    <property type="project" value="UniProtKB-SubCell"/>
</dbReference>
<dbReference type="GO" id="GO:0004473">
    <property type="term" value="F:malate dehydrogenase (decarboxylating) (NADP+) activity"/>
    <property type="evidence" value="ECO:0007669"/>
    <property type="project" value="UniProtKB-EC"/>
</dbReference>
<dbReference type="GO" id="GO:0046872">
    <property type="term" value="F:metal ion binding"/>
    <property type="evidence" value="ECO:0007669"/>
    <property type="project" value="UniProtKB-KW"/>
</dbReference>
<dbReference type="GO" id="GO:0051287">
    <property type="term" value="F:NAD binding"/>
    <property type="evidence" value="ECO:0007669"/>
    <property type="project" value="InterPro"/>
</dbReference>
<dbReference type="GO" id="GO:0008948">
    <property type="term" value="F:oxaloacetate decarboxylase activity"/>
    <property type="evidence" value="ECO:0007669"/>
    <property type="project" value="RHEA"/>
</dbReference>
<dbReference type="GO" id="GO:0006108">
    <property type="term" value="P:malate metabolic process"/>
    <property type="evidence" value="ECO:0007669"/>
    <property type="project" value="TreeGrafter"/>
</dbReference>
<dbReference type="CDD" id="cd05312">
    <property type="entry name" value="NAD_bind_1_malic_enz"/>
    <property type="match status" value="1"/>
</dbReference>
<dbReference type="FunFam" id="3.40.50.10380:FF:000002">
    <property type="entry name" value="Malic enzyme"/>
    <property type="match status" value="1"/>
</dbReference>
<dbReference type="FunFam" id="3.40.50.720:FF:000067">
    <property type="entry name" value="Malic enzyme"/>
    <property type="match status" value="1"/>
</dbReference>
<dbReference type="Gene3D" id="3.40.50.10380">
    <property type="entry name" value="Malic enzyme, N-terminal domain"/>
    <property type="match status" value="1"/>
</dbReference>
<dbReference type="Gene3D" id="3.40.50.720">
    <property type="entry name" value="NAD(P)-binding Rossmann-like Domain"/>
    <property type="match status" value="1"/>
</dbReference>
<dbReference type="InterPro" id="IPR046346">
    <property type="entry name" value="Aminoacid_DH-like_N_sf"/>
</dbReference>
<dbReference type="InterPro" id="IPR015884">
    <property type="entry name" value="Malic_enzyme_CS"/>
</dbReference>
<dbReference type="InterPro" id="IPR012301">
    <property type="entry name" value="Malic_N_dom"/>
</dbReference>
<dbReference type="InterPro" id="IPR037062">
    <property type="entry name" value="Malic_N_dom_sf"/>
</dbReference>
<dbReference type="InterPro" id="IPR012302">
    <property type="entry name" value="Malic_NAD-bd"/>
</dbReference>
<dbReference type="InterPro" id="IPR001891">
    <property type="entry name" value="Malic_OxRdtase"/>
</dbReference>
<dbReference type="InterPro" id="IPR036291">
    <property type="entry name" value="NAD(P)-bd_dom_sf"/>
</dbReference>
<dbReference type="NCBIfam" id="NF010052">
    <property type="entry name" value="PRK13529.1"/>
    <property type="match status" value="1"/>
</dbReference>
<dbReference type="PANTHER" id="PTHR23406">
    <property type="entry name" value="MALIC ENZYME-RELATED"/>
    <property type="match status" value="1"/>
</dbReference>
<dbReference type="PANTHER" id="PTHR23406:SF76">
    <property type="entry name" value="NADP-DEPENDENT MALIC ENZYME 4, CHLOROPLASTIC"/>
    <property type="match status" value="1"/>
</dbReference>
<dbReference type="Pfam" id="PF00390">
    <property type="entry name" value="malic"/>
    <property type="match status" value="1"/>
</dbReference>
<dbReference type="Pfam" id="PF03949">
    <property type="entry name" value="Malic_M"/>
    <property type="match status" value="1"/>
</dbReference>
<dbReference type="PIRSF" id="PIRSF000106">
    <property type="entry name" value="ME"/>
    <property type="match status" value="1"/>
</dbReference>
<dbReference type="PRINTS" id="PR00072">
    <property type="entry name" value="MALOXRDTASE"/>
</dbReference>
<dbReference type="SMART" id="SM01274">
    <property type="entry name" value="malic"/>
    <property type="match status" value="1"/>
</dbReference>
<dbReference type="SMART" id="SM00919">
    <property type="entry name" value="Malic_M"/>
    <property type="match status" value="1"/>
</dbReference>
<dbReference type="SUPFAM" id="SSF53223">
    <property type="entry name" value="Aminoacid dehydrogenase-like, N-terminal domain"/>
    <property type="match status" value="1"/>
</dbReference>
<dbReference type="SUPFAM" id="SSF51735">
    <property type="entry name" value="NAD(P)-binding Rossmann-fold domains"/>
    <property type="match status" value="1"/>
</dbReference>
<dbReference type="PROSITE" id="PS00331">
    <property type="entry name" value="MALIC_ENZYMES"/>
    <property type="match status" value="1"/>
</dbReference>
<gene>
    <name type="primary">MODA</name>
</gene>
<reference key="1">
    <citation type="journal article" date="1994" name="Plant Mol. Biol.">
        <title>The C3 plant Flaveria pringlei contains a plastidic NADP-malic enzyme which is orthologous to the C4 isoform of the C4 plant F. trinervia.</title>
        <authorList>
            <person name="Lipka B."/>
            <person name="Steinmueller K."/>
            <person name="Rosche E."/>
            <person name="Borsch D."/>
            <person name="Westhoff P."/>
        </authorList>
    </citation>
    <scope>NUCLEOTIDE SEQUENCE [MRNA]</scope>
    <source>
        <tissue>Leaf</tissue>
    </source>
</reference>